<organism>
    <name type="scientific">Zea mays</name>
    <name type="common">Maize</name>
    <dbReference type="NCBI Taxonomy" id="4577"/>
    <lineage>
        <taxon>Eukaryota</taxon>
        <taxon>Viridiplantae</taxon>
        <taxon>Streptophyta</taxon>
        <taxon>Embryophyta</taxon>
        <taxon>Tracheophyta</taxon>
        <taxon>Spermatophyta</taxon>
        <taxon>Magnoliopsida</taxon>
        <taxon>Liliopsida</taxon>
        <taxon>Poales</taxon>
        <taxon>Poaceae</taxon>
        <taxon>PACMAD clade</taxon>
        <taxon>Panicoideae</taxon>
        <taxon>Andropogonodae</taxon>
        <taxon>Andropogoneae</taxon>
        <taxon>Tripsacinae</taxon>
        <taxon>Zea</taxon>
    </lineage>
</organism>
<keyword id="KW-0539">Nucleus</keyword>
<keyword id="KW-1185">Reference proteome</keyword>
<accession>B6SLJ0</accession>
<protein>
    <recommendedName>
        <fullName>Ninja-family protein 3</fullName>
    </recommendedName>
</protein>
<comment type="subcellular location">
    <subcellularLocation>
        <location evidence="1">Nucleus</location>
    </subcellularLocation>
</comment>
<comment type="similarity">
    <text evidence="3">Belongs to the Ninja family.</text>
</comment>
<feature type="chain" id="PRO_0000369621" description="Ninja-family protein 3">
    <location>
        <begin position="1"/>
        <end position="262"/>
    </location>
</feature>
<feature type="region of interest" description="Disordered" evidence="2">
    <location>
        <begin position="48"/>
        <end position="69"/>
    </location>
</feature>
<evidence type="ECO:0000250" key="1"/>
<evidence type="ECO:0000256" key="2">
    <source>
        <dbReference type="SAM" id="MobiDB-lite"/>
    </source>
</evidence>
<evidence type="ECO:0000305" key="3"/>
<name>NNJA3_MAIZE</name>
<sequence length="262" mass="28092">MWSQIPGTLMRTSSLPAVIEASGNDDWKKRKEAQSLKRLEVKKKRIERRNSLTCNTSKEAAGQSPEEMNANTDKLVSSDETIASANESHSSGKHLVKGLPPKYQATITSQDSSSAMRKKPNSAFKGTAITEEQNSSSSVPSSGEAISSVTAPSLPALSLVPITATLGSREDQSILGRAGARANGMGDVERRMMQEMPGVFTKGLSNGSRVEGFLYKYSKGEVRIVCICHGSFLTPSEFVEHAGAGKVDNPLRHIVVSATPNL</sequence>
<proteinExistence type="evidence at transcript level"/>
<dbReference type="EMBL" id="EU953605">
    <property type="protein sequence ID" value="ACG25723.1"/>
    <property type="molecule type" value="mRNA"/>
</dbReference>
<dbReference type="SMR" id="B6SLJ0"/>
<dbReference type="FunCoup" id="B6SLJ0">
    <property type="interactions" value="6"/>
</dbReference>
<dbReference type="STRING" id="4577.B6SLJ0"/>
<dbReference type="InParanoid" id="B6SLJ0"/>
<dbReference type="Proteomes" id="UP000007305">
    <property type="component" value="Unplaced"/>
</dbReference>
<dbReference type="ExpressionAtlas" id="B6SLJ0">
    <property type="expression patterns" value="baseline and differential"/>
</dbReference>
<dbReference type="GO" id="GO:0005634">
    <property type="term" value="C:nucleus"/>
    <property type="evidence" value="ECO:0000318"/>
    <property type="project" value="GO_Central"/>
</dbReference>
<dbReference type="GO" id="GO:0045892">
    <property type="term" value="P:negative regulation of DNA-templated transcription"/>
    <property type="evidence" value="ECO:0000318"/>
    <property type="project" value="GO_Central"/>
</dbReference>
<dbReference type="GO" id="GO:0007165">
    <property type="term" value="P:signal transduction"/>
    <property type="evidence" value="ECO:0007669"/>
    <property type="project" value="InterPro"/>
</dbReference>
<dbReference type="InterPro" id="IPR031307">
    <property type="entry name" value="Ninja_fam"/>
</dbReference>
<dbReference type="InterPro" id="IPR032310">
    <property type="entry name" value="NLS_NINJA_AFP-like"/>
</dbReference>
<dbReference type="InterPro" id="IPR032308">
    <property type="entry name" value="TDBD"/>
</dbReference>
<dbReference type="PANTHER" id="PTHR31413">
    <property type="entry name" value="AFP HOMOLOG 2"/>
    <property type="match status" value="1"/>
</dbReference>
<dbReference type="PANTHER" id="PTHR31413:SF49">
    <property type="entry name" value="NINJA-FAMILY PROTEIN MODD"/>
    <property type="match status" value="1"/>
</dbReference>
<dbReference type="Pfam" id="PF16136">
    <property type="entry name" value="NLS_NINJA_AFP"/>
    <property type="match status" value="1"/>
</dbReference>
<dbReference type="Pfam" id="PF16135">
    <property type="entry name" value="TDBD"/>
    <property type="match status" value="1"/>
</dbReference>
<reference key="1">
    <citation type="journal article" date="2009" name="Plant Mol. Biol.">
        <title>Insights into corn genes derived from large-scale cDNA sequencing.</title>
        <authorList>
            <person name="Alexandrov N.N."/>
            <person name="Brover V.V."/>
            <person name="Freidin S."/>
            <person name="Troukhan M.E."/>
            <person name="Tatarinova T.V."/>
            <person name="Zhang H."/>
            <person name="Swaller T.J."/>
            <person name="Lu Y.-P."/>
            <person name="Bouck J."/>
            <person name="Flavell R.B."/>
            <person name="Feldmann K.A."/>
        </authorList>
    </citation>
    <scope>NUCLEOTIDE SEQUENCE [LARGE SCALE MRNA]</scope>
</reference>